<organism>
    <name type="scientific">Bartonella tribocorum (strain CIP 105476 / IBS 506)</name>
    <dbReference type="NCBI Taxonomy" id="382640"/>
    <lineage>
        <taxon>Bacteria</taxon>
        <taxon>Pseudomonadati</taxon>
        <taxon>Pseudomonadota</taxon>
        <taxon>Alphaproteobacteria</taxon>
        <taxon>Hyphomicrobiales</taxon>
        <taxon>Bartonellaceae</taxon>
        <taxon>Bartonella</taxon>
    </lineage>
</organism>
<name>RBFA_BART1</name>
<gene>
    <name evidence="1" type="primary">rbfA</name>
    <name type="ordered locus">BT_0238</name>
</gene>
<accession>A9IMT2</accession>
<sequence>MKNAGPSQRQLRVAEQVRHAVAHILQRGILLDDVLKDIVISVSEVRISPDLKIATCFVSPLSTLKNTSHTDVVNTLNKHSRFLRGEISHALRQMKYMPELRFRLDNSFDNFSKIDALLRSPEVARDLHHSDKDED</sequence>
<feature type="chain" id="PRO_1000073750" description="Ribosome-binding factor A">
    <location>
        <begin position="1"/>
        <end position="135"/>
    </location>
</feature>
<evidence type="ECO:0000255" key="1">
    <source>
        <dbReference type="HAMAP-Rule" id="MF_00003"/>
    </source>
</evidence>
<protein>
    <recommendedName>
        <fullName evidence="1">Ribosome-binding factor A</fullName>
    </recommendedName>
</protein>
<comment type="function">
    <text evidence="1">One of several proteins that assist in the late maturation steps of the functional core of the 30S ribosomal subunit. Associates with free 30S ribosomal subunits (but not with 30S subunits that are part of 70S ribosomes or polysomes). Required for efficient processing of 16S rRNA. May interact with the 5'-terminal helix region of 16S rRNA.</text>
</comment>
<comment type="subunit">
    <text evidence="1">Monomer. Binds 30S ribosomal subunits, but not 50S ribosomal subunits or 70S ribosomes.</text>
</comment>
<comment type="subcellular location">
    <subcellularLocation>
        <location evidence="1">Cytoplasm</location>
    </subcellularLocation>
</comment>
<comment type="similarity">
    <text evidence="1">Belongs to the RbfA family.</text>
</comment>
<proteinExistence type="inferred from homology"/>
<reference key="1">
    <citation type="journal article" date="2007" name="Nat. Genet.">
        <title>Genomic analysis of Bartonella identifies type IV secretion systems as host adaptability factors.</title>
        <authorList>
            <person name="Saenz H.L."/>
            <person name="Engel P."/>
            <person name="Stoeckli M.C."/>
            <person name="Lanz C."/>
            <person name="Raddatz G."/>
            <person name="Vayssier-Taussat M."/>
            <person name="Birtles R."/>
            <person name="Schuster S.C."/>
            <person name="Dehio C."/>
        </authorList>
    </citation>
    <scope>NUCLEOTIDE SEQUENCE [LARGE SCALE GENOMIC DNA]</scope>
    <source>
        <strain>CIP 105476 / IBS 506</strain>
    </source>
</reference>
<dbReference type="EMBL" id="AM260525">
    <property type="protein sequence ID" value="CAK00714.1"/>
    <property type="molecule type" value="Genomic_DNA"/>
</dbReference>
<dbReference type="RefSeq" id="WP_012230631.1">
    <property type="nucleotide sequence ID" value="NC_010161.1"/>
</dbReference>
<dbReference type="SMR" id="A9IMT2"/>
<dbReference type="KEGG" id="btr:BT_0238"/>
<dbReference type="eggNOG" id="COG0858">
    <property type="taxonomic scope" value="Bacteria"/>
</dbReference>
<dbReference type="HOGENOM" id="CLU_089475_1_0_5"/>
<dbReference type="Proteomes" id="UP000001592">
    <property type="component" value="Chromosome"/>
</dbReference>
<dbReference type="GO" id="GO:0005829">
    <property type="term" value="C:cytosol"/>
    <property type="evidence" value="ECO:0007669"/>
    <property type="project" value="TreeGrafter"/>
</dbReference>
<dbReference type="GO" id="GO:0043024">
    <property type="term" value="F:ribosomal small subunit binding"/>
    <property type="evidence" value="ECO:0007669"/>
    <property type="project" value="TreeGrafter"/>
</dbReference>
<dbReference type="GO" id="GO:0030490">
    <property type="term" value="P:maturation of SSU-rRNA"/>
    <property type="evidence" value="ECO:0007669"/>
    <property type="project" value="UniProtKB-UniRule"/>
</dbReference>
<dbReference type="Gene3D" id="3.30.300.20">
    <property type="match status" value="1"/>
</dbReference>
<dbReference type="HAMAP" id="MF_00003">
    <property type="entry name" value="RbfA"/>
    <property type="match status" value="1"/>
</dbReference>
<dbReference type="InterPro" id="IPR015946">
    <property type="entry name" value="KH_dom-like_a/b"/>
</dbReference>
<dbReference type="InterPro" id="IPR000238">
    <property type="entry name" value="RbfA"/>
</dbReference>
<dbReference type="InterPro" id="IPR023799">
    <property type="entry name" value="RbfA_dom_sf"/>
</dbReference>
<dbReference type="InterPro" id="IPR020053">
    <property type="entry name" value="Ribosome-bd_factorA_CS"/>
</dbReference>
<dbReference type="NCBIfam" id="NF001802">
    <property type="entry name" value="PRK00521.2-5"/>
    <property type="match status" value="1"/>
</dbReference>
<dbReference type="NCBIfam" id="TIGR00082">
    <property type="entry name" value="rbfA"/>
    <property type="match status" value="1"/>
</dbReference>
<dbReference type="PANTHER" id="PTHR33515">
    <property type="entry name" value="RIBOSOME-BINDING FACTOR A, CHLOROPLASTIC-RELATED"/>
    <property type="match status" value="1"/>
</dbReference>
<dbReference type="PANTHER" id="PTHR33515:SF1">
    <property type="entry name" value="RIBOSOME-BINDING FACTOR A, CHLOROPLASTIC-RELATED"/>
    <property type="match status" value="1"/>
</dbReference>
<dbReference type="Pfam" id="PF02033">
    <property type="entry name" value="RBFA"/>
    <property type="match status" value="1"/>
</dbReference>
<dbReference type="SUPFAM" id="SSF89919">
    <property type="entry name" value="Ribosome-binding factor A, RbfA"/>
    <property type="match status" value="1"/>
</dbReference>
<dbReference type="PROSITE" id="PS01319">
    <property type="entry name" value="RBFA"/>
    <property type="match status" value="1"/>
</dbReference>
<keyword id="KW-0963">Cytoplasm</keyword>
<keyword id="KW-0690">Ribosome biogenesis</keyword>